<keyword id="KW-0378">Hydrolase</keyword>
<keyword id="KW-0479">Metal-binding</keyword>
<keyword id="KW-0665">Pyrimidine biosynthesis</keyword>
<keyword id="KW-0862">Zinc</keyword>
<proteinExistence type="inferred from homology"/>
<evidence type="ECO:0000255" key="1">
    <source>
        <dbReference type="HAMAP-Rule" id="MF_00219"/>
    </source>
</evidence>
<accession>A7ZZ20</accession>
<feature type="chain" id="PRO_1000058649" description="Dihydroorotase">
    <location>
        <begin position="1"/>
        <end position="348"/>
    </location>
</feature>
<feature type="active site" evidence="1">
    <location>
        <position position="251"/>
    </location>
</feature>
<feature type="binding site" evidence="1">
    <location>
        <position position="17"/>
    </location>
    <ligand>
        <name>Zn(2+)</name>
        <dbReference type="ChEBI" id="CHEBI:29105"/>
        <label>1</label>
    </ligand>
</feature>
<feature type="binding site" evidence="1">
    <location>
        <begin position="19"/>
        <end position="21"/>
    </location>
    <ligand>
        <name>substrate</name>
    </ligand>
</feature>
<feature type="binding site" evidence="1">
    <location>
        <position position="19"/>
    </location>
    <ligand>
        <name>Zn(2+)</name>
        <dbReference type="ChEBI" id="CHEBI:29105"/>
        <label>1</label>
    </ligand>
</feature>
<feature type="binding site" evidence="1">
    <location>
        <position position="45"/>
    </location>
    <ligand>
        <name>substrate</name>
    </ligand>
</feature>
<feature type="binding site" description="via carbamate group" evidence="1">
    <location>
        <position position="103"/>
    </location>
    <ligand>
        <name>Zn(2+)</name>
        <dbReference type="ChEBI" id="CHEBI:29105"/>
        <label>1</label>
    </ligand>
</feature>
<feature type="binding site" description="via carbamate group" evidence="1">
    <location>
        <position position="103"/>
    </location>
    <ligand>
        <name>Zn(2+)</name>
        <dbReference type="ChEBI" id="CHEBI:29105"/>
        <label>2</label>
    </ligand>
</feature>
<feature type="binding site" evidence="1">
    <location>
        <position position="140"/>
    </location>
    <ligand>
        <name>substrate</name>
    </ligand>
</feature>
<feature type="binding site" evidence="1">
    <location>
        <position position="140"/>
    </location>
    <ligand>
        <name>Zn(2+)</name>
        <dbReference type="ChEBI" id="CHEBI:29105"/>
        <label>2</label>
    </ligand>
</feature>
<feature type="binding site" evidence="1">
    <location>
        <position position="178"/>
    </location>
    <ligand>
        <name>Zn(2+)</name>
        <dbReference type="ChEBI" id="CHEBI:29105"/>
        <label>2</label>
    </ligand>
</feature>
<feature type="binding site" evidence="1">
    <location>
        <position position="223"/>
    </location>
    <ligand>
        <name>substrate</name>
    </ligand>
</feature>
<feature type="binding site" evidence="1">
    <location>
        <position position="251"/>
    </location>
    <ligand>
        <name>Zn(2+)</name>
        <dbReference type="ChEBI" id="CHEBI:29105"/>
        <label>1</label>
    </ligand>
</feature>
<feature type="binding site" evidence="1">
    <location>
        <position position="255"/>
    </location>
    <ligand>
        <name>substrate</name>
    </ligand>
</feature>
<feature type="binding site" evidence="1">
    <location>
        <position position="267"/>
    </location>
    <ligand>
        <name>substrate</name>
    </ligand>
</feature>
<feature type="modified residue" description="N6-carboxylysine" evidence="1">
    <location>
        <position position="103"/>
    </location>
</feature>
<dbReference type="EC" id="3.5.2.3" evidence="1"/>
<dbReference type="EMBL" id="CP000802">
    <property type="protein sequence ID" value="ABV05524.1"/>
    <property type="molecule type" value="Genomic_DNA"/>
</dbReference>
<dbReference type="RefSeq" id="WP_000126543.1">
    <property type="nucleotide sequence ID" value="NC_009800.1"/>
</dbReference>
<dbReference type="SMR" id="A7ZZ20"/>
<dbReference type="MEROPS" id="M38.A02"/>
<dbReference type="KEGG" id="ecx:EcHS_A1185"/>
<dbReference type="HOGENOM" id="CLU_041558_1_0_6"/>
<dbReference type="UniPathway" id="UPA00070">
    <property type="reaction ID" value="UER00117"/>
</dbReference>
<dbReference type="GO" id="GO:0005829">
    <property type="term" value="C:cytosol"/>
    <property type="evidence" value="ECO:0007669"/>
    <property type="project" value="TreeGrafter"/>
</dbReference>
<dbReference type="GO" id="GO:0004151">
    <property type="term" value="F:dihydroorotase activity"/>
    <property type="evidence" value="ECO:0007669"/>
    <property type="project" value="UniProtKB-UniRule"/>
</dbReference>
<dbReference type="GO" id="GO:0008270">
    <property type="term" value="F:zinc ion binding"/>
    <property type="evidence" value="ECO:0007669"/>
    <property type="project" value="UniProtKB-UniRule"/>
</dbReference>
<dbReference type="GO" id="GO:0006207">
    <property type="term" value="P:'de novo' pyrimidine nucleobase biosynthetic process"/>
    <property type="evidence" value="ECO:0007669"/>
    <property type="project" value="TreeGrafter"/>
</dbReference>
<dbReference type="GO" id="GO:0044205">
    <property type="term" value="P:'de novo' UMP biosynthetic process"/>
    <property type="evidence" value="ECO:0007669"/>
    <property type="project" value="UniProtKB-UniRule"/>
</dbReference>
<dbReference type="CDD" id="cd01294">
    <property type="entry name" value="DHOase"/>
    <property type="match status" value="1"/>
</dbReference>
<dbReference type="FunFam" id="3.20.20.140:FF:000006">
    <property type="entry name" value="Dihydroorotase"/>
    <property type="match status" value="1"/>
</dbReference>
<dbReference type="Gene3D" id="3.20.20.140">
    <property type="entry name" value="Metal-dependent hydrolases"/>
    <property type="match status" value="1"/>
</dbReference>
<dbReference type="HAMAP" id="MF_00219">
    <property type="entry name" value="PyrC_classII"/>
    <property type="match status" value="1"/>
</dbReference>
<dbReference type="InterPro" id="IPR006680">
    <property type="entry name" value="Amidohydro-rel"/>
</dbReference>
<dbReference type="InterPro" id="IPR004721">
    <property type="entry name" value="DHOdimr"/>
</dbReference>
<dbReference type="InterPro" id="IPR002195">
    <property type="entry name" value="Dihydroorotase_CS"/>
</dbReference>
<dbReference type="InterPro" id="IPR032466">
    <property type="entry name" value="Metal_Hydrolase"/>
</dbReference>
<dbReference type="NCBIfam" id="TIGR00856">
    <property type="entry name" value="pyrC_dimer"/>
    <property type="match status" value="1"/>
</dbReference>
<dbReference type="PANTHER" id="PTHR43137">
    <property type="entry name" value="DIHYDROOROTASE"/>
    <property type="match status" value="1"/>
</dbReference>
<dbReference type="PANTHER" id="PTHR43137:SF1">
    <property type="entry name" value="DIHYDROOROTASE"/>
    <property type="match status" value="1"/>
</dbReference>
<dbReference type="Pfam" id="PF01979">
    <property type="entry name" value="Amidohydro_1"/>
    <property type="match status" value="1"/>
</dbReference>
<dbReference type="PIRSF" id="PIRSF001237">
    <property type="entry name" value="DHOdimr"/>
    <property type="match status" value="1"/>
</dbReference>
<dbReference type="SUPFAM" id="SSF51556">
    <property type="entry name" value="Metallo-dependent hydrolases"/>
    <property type="match status" value="1"/>
</dbReference>
<dbReference type="PROSITE" id="PS00482">
    <property type="entry name" value="DIHYDROOROTASE_1"/>
    <property type="match status" value="1"/>
</dbReference>
<dbReference type="PROSITE" id="PS00483">
    <property type="entry name" value="DIHYDROOROTASE_2"/>
    <property type="match status" value="1"/>
</dbReference>
<gene>
    <name evidence="1" type="primary">pyrC</name>
    <name type="ordered locus">EcHS_A1185</name>
</gene>
<reference key="1">
    <citation type="journal article" date="2008" name="J. Bacteriol.">
        <title>The pangenome structure of Escherichia coli: comparative genomic analysis of E. coli commensal and pathogenic isolates.</title>
        <authorList>
            <person name="Rasko D.A."/>
            <person name="Rosovitz M.J."/>
            <person name="Myers G.S.A."/>
            <person name="Mongodin E.F."/>
            <person name="Fricke W.F."/>
            <person name="Gajer P."/>
            <person name="Crabtree J."/>
            <person name="Sebaihia M."/>
            <person name="Thomson N.R."/>
            <person name="Chaudhuri R."/>
            <person name="Henderson I.R."/>
            <person name="Sperandio V."/>
            <person name="Ravel J."/>
        </authorList>
    </citation>
    <scope>NUCLEOTIDE SEQUENCE [LARGE SCALE GENOMIC DNA]</scope>
    <source>
        <strain>HS</strain>
    </source>
</reference>
<comment type="function">
    <text evidence="1">Catalyzes the reversible cyclization of carbamoyl aspartate to dihydroorotate.</text>
</comment>
<comment type="catalytic activity">
    <reaction evidence="1">
        <text>(S)-dihydroorotate + H2O = N-carbamoyl-L-aspartate + H(+)</text>
        <dbReference type="Rhea" id="RHEA:24296"/>
        <dbReference type="ChEBI" id="CHEBI:15377"/>
        <dbReference type="ChEBI" id="CHEBI:15378"/>
        <dbReference type="ChEBI" id="CHEBI:30864"/>
        <dbReference type="ChEBI" id="CHEBI:32814"/>
        <dbReference type="EC" id="3.5.2.3"/>
    </reaction>
</comment>
<comment type="cofactor">
    <cofactor evidence="1">
        <name>Zn(2+)</name>
        <dbReference type="ChEBI" id="CHEBI:29105"/>
    </cofactor>
    <text evidence="1">Binds 2 Zn(2+) ions per subunit.</text>
</comment>
<comment type="pathway">
    <text evidence="1">Pyrimidine metabolism; UMP biosynthesis via de novo pathway; (S)-dihydroorotate from bicarbonate: step 3/3.</text>
</comment>
<comment type="subunit">
    <text evidence="1">Homodimer.</text>
</comment>
<comment type="similarity">
    <text evidence="1">Belongs to the metallo-dependent hydrolases superfamily. DHOase family. Class II DHOase subfamily.</text>
</comment>
<organism>
    <name type="scientific">Escherichia coli O9:H4 (strain HS)</name>
    <dbReference type="NCBI Taxonomy" id="331112"/>
    <lineage>
        <taxon>Bacteria</taxon>
        <taxon>Pseudomonadati</taxon>
        <taxon>Pseudomonadota</taxon>
        <taxon>Gammaproteobacteria</taxon>
        <taxon>Enterobacterales</taxon>
        <taxon>Enterobacteriaceae</taxon>
        <taxon>Escherichia</taxon>
    </lineage>
</organism>
<protein>
    <recommendedName>
        <fullName evidence="1">Dihydroorotase</fullName>
        <shortName evidence="1">DHOase</shortName>
        <ecNumber evidence="1">3.5.2.3</ecNumber>
    </recommendedName>
</protein>
<sequence length="348" mass="38813">MTAPSQVLKIRRPDDWHLHLRDGDMLKTVVPYTSEIYGRAIVMPNLAPPVTTVEAAVAYRQRILDAVPAGHDFTPLMTCYLTDSLDPNELERGFNEGVFTAAKLYPANATTNSSHGVTSVDAIMPVLERMEKIGMPLLVHGEVTHADIDIFDREARFIESVMEPLRQRLTALKVVFEHITTKDAADYVRDGNERLAATITPQHLMFNRNHMLVGGVRPHLYCLPILKRNIHQQALRELVASGFNRVFLGTDSAPHARHRKESSCGCAGCFNAPTALGSYATVFEEMNALQHFEAFCSVNGPQFYGLPVNDTFIELVREEQQVAESIALTDDTLVPFLAGETVRWSVKQ</sequence>
<name>PYRC_ECOHS</name>